<gene>
    <name evidence="1" type="primary">metN1</name>
    <name type="ordered locus">SAS0419</name>
</gene>
<proteinExistence type="inferred from homology"/>
<name>METN1_STAAS</name>
<feature type="chain" id="PRO_0000270393" description="Methionine import ATP-binding protein MetN 1">
    <location>
        <begin position="1"/>
        <end position="341"/>
    </location>
</feature>
<feature type="domain" description="ABC transporter" evidence="1">
    <location>
        <begin position="2"/>
        <end position="241"/>
    </location>
</feature>
<feature type="binding site" evidence="1">
    <location>
        <begin position="38"/>
        <end position="45"/>
    </location>
    <ligand>
        <name>ATP</name>
        <dbReference type="ChEBI" id="CHEBI:30616"/>
    </ligand>
</feature>
<organism>
    <name type="scientific">Staphylococcus aureus (strain MSSA476)</name>
    <dbReference type="NCBI Taxonomy" id="282459"/>
    <lineage>
        <taxon>Bacteria</taxon>
        <taxon>Bacillati</taxon>
        <taxon>Bacillota</taxon>
        <taxon>Bacilli</taxon>
        <taxon>Bacillales</taxon>
        <taxon>Staphylococcaceae</taxon>
        <taxon>Staphylococcus</taxon>
    </lineage>
</organism>
<accession>Q6GC27</accession>
<sequence length="341" mass="38676">MIEFRQVSKTFNKKKQKIDALKDVSFTVNRNDIFGVIGYSGAGKSTLVRLVNHLEAASNGQVIVDGHDITNYSDKMMRDIKKDIGMIFQHFNLLNSATVFKNVAMPLILSKKSKTEIKQRVTEMLEFVGLSDKKDQFPEELSGGQKQRVAIARALVTNPKILLCDEATSALDPATTASILTLLKNVNQTFGITIMMITHEMRVIKDICNRVAVMEKGQVVETGTVKEVFSHPKTTIAQNFVSTVIQTEPSTSLIRRLNDEQVGDFKDYKIFVEETQVTQPIINDLIQICGREVKILFSSMSEIQGNTVCYMWLRFNMDQQFDDTAINQYFKEKNIQFEEVH</sequence>
<evidence type="ECO:0000255" key="1">
    <source>
        <dbReference type="HAMAP-Rule" id="MF_01719"/>
    </source>
</evidence>
<protein>
    <recommendedName>
        <fullName evidence="1">Methionine import ATP-binding protein MetN 1</fullName>
        <ecNumber evidence="1">7.4.2.11</ecNumber>
    </recommendedName>
</protein>
<comment type="function">
    <text evidence="1">Part of the ABC transporter complex MetNIQ involved in methionine import. Responsible for energy coupling to the transport system.</text>
</comment>
<comment type="catalytic activity">
    <reaction evidence="1">
        <text>L-methionine(out) + ATP + H2O = L-methionine(in) + ADP + phosphate + H(+)</text>
        <dbReference type="Rhea" id="RHEA:29779"/>
        <dbReference type="ChEBI" id="CHEBI:15377"/>
        <dbReference type="ChEBI" id="CHEBI:15378"/>
        <dbReference type="ChEBI" id="CHEBI:30616"/>
        <dbReference type="ChEBI" id="CHEBI:43474"/>
        <dbReference type="ChEBI" id="CHEBI:57844"/>
        <dbReference type="ChEBI" id="CHEBI:456216"/>
        <dbReference type="EC" id="7.4.2.11"/>
    </reaction>
</comment>
<comment type="catalytic activity">
    <reaction evidence="1">
        <text>D-methionine(out) + ATP + H2O = D-methionine(in) + ADP + phosphate + H(+)</text>
        <dbReference type="Rhea" id="RHEA:29767"/>
        <dbReference type="ChEBI" id="CHEBI:15377"/>
        <dbReference type="ChEBI" id="CHEBI:15378"/>
        <dbReference type="ChEBI" id="CHEBI:30616"/>
        <dbReference type="ChEBI" id="CHEBI:43474"/>
        <dbReference type="ChEBI" id="CHEBI:57932"/>
        <dbReference type="ChEBI" id="CHEBI:456216"/>
        <dbReference type="EC" id="7.4.2.11"/>
    </reaction>
</comment>
<comment type="subunit">
    <text evidence="1">The complex is composed of two ATP-binding proteins (MetN), two transmembrane proteins (MetI) and a solute-binding protein (MetQ).</text>
</comment>
<comment type="subcellular location">
    <subcellularLocation>
        <location evidence="1">Cell membrane</location>
        <topology evidence="1">Peripheral membrane protein</topology>
    </subcellularLocation>
</comment>
<comment type="similarity">
    <text evidence="1">Belongs to the ABC transporter superfamily. Methionine importer (TC 3.A.1.24) family.</text>
</comment>
<reference key="1">
    <citation type="journal article" date="2004" name="Proc. Natl. Acad. Sci. U.S.A.">
        <title>Complete genomes of two clinical Staphylococcus aureus strains: evidence for the rapid evolution of virulence and drug resistance.</title>
        <authorList>
            <person name="Holden M.T.G."/>
            <person name="Feil E.J."/>
            <person name="Lindsay J.A."/>
            <person name="Peacock S.J."/>
            <person name="Day N.P.J."/>
            <person name="Enright M.C."/>
            <person name="Foster T.J."/>
            <person name="Moore C.E."/>
            <person name="Hurst L."/>
            <person name="Atkin R."/>
            <person name="Barron A."/>
            <person name="Bason N."/>
            <person name="Bentley S.D."/>
            <person name="Chillingworth C."/>
            <person name="Chillingworth T."/>
            <person name="Churcher C."/>
            <person name="Clark L."/>
            <person name="Corton C."/>
            <person name="Cronin A."/>
            <person name="Doggett J."/>
            <person name="Dowd L."/>
            <person name="Feltwell T."/>
            <person name="Hance Z."/>
            <person name="Harris B."/>
            <person name="Hauser H."/>
            <person name="Holroyd S."/>
            <person name="Jagels K."/>
            <person name="James K.D."/>
            <person name="Lennard N."/>
            <person name="Line A."/>
            <person name="Mayes R."/>
            <person name="Moule S."/>
            <person name="Mungall K."/>
            <person name="Ormond D."/>
            <person name="Quail M.A."/>
            <person name="Rabbinowitsch E."/>
            <person name="Rutherford K.M."/>
            <person name="Sanders M."/>
            <person name="Sharp S."/>
            <person name="Simmonds M."/>
            <person name="Stevens K."/>
            <person name="Whitehead S."/>
            <person name="Barrell B.G."/>
            <person name="Spratt B.G."/>
            <person name="Parkhill J."/>
        </authorList>
    </citation>
    <scope>NUCLEOTIDE SEQUENCE [LARGE SCALE GENOMIC DNA]</scope>
    <source>
        <strain>MSSA476</strain>
    </source>
</reference>
<dbReference type="EC" id="7.4.2.11" evidence="1"/>
<dbReference type="EMBL" id="BX571857">
    <property type="protein sequence ID" value="CAG42193.1"/>
    <property type="molecule type" value="Genomic_DNA"/>
</dbReference>
<dbReference type="RefSeq" id="WP_000569289.1">
    <property type="nucleotide sequence ID" value="NC_002953.3"/>
</dbReference>
<dbReference type="SMR" id="Q6GC27"/>
<dbReference type="KEGG" id="sas:SAS0419"/>
<dbReference type="HOGENOM" id="CLU_000604_1_3_9"/>
<dbReference type="GO" id="GO:0005886">
    <property type="term" value="C:plasma membrane"/>
    <property type="evidence" value="ECO:0007669"/>
    <property type="project" value="UniProtKB-SubCell"/>
</dbReference>
<dbReference type="GO" id="GO:0033232">
    <property type="term" value="F:ABC-type D-methionine transporter activity"/>
    <property type="evidence" value="ECO:0007669"/>
    <property type="project" value="UniProtKB-EC"/>
</dbReference>
<dbReference type="GO" id="GO:0005524">
    <property type="term" value="F:ATP binding"/>
    <property type="evidence" value="ECO:0007669"/>
    <property type="project" value="UniProtKB-KW"/>
</dbReference>
<dbReference type="GO" id="GO:0016887">
    <property type="term" value="F:ATP hydrolysis activity"/>
    <property type="evidence" value="ECO:0007669"/>
    <property type="project" value="InterPro"/>
</dbReference>
<dbReference type="CDD" id="cd03258">
    <property type="entry name" value="ABC_MetN_methionine_transporter"/>
    <property type="match status" value="1"/>
</dbReference>
<dbReference type="FunFam" id="3.40.50.300:FF:000056">
    <property type="entry name" value="Cell division ATP-binding protein FtsE"/>
    <property type="match status" value="1"/>
</dbReference>
<dbReference type="Gene3D" id="3.30.70.260">
    <property type="match status" value="1"/>
</dbReference>
<dbReference type="Gene3D" id="3.40.50.300">
    <property type="entry name" value="P-loop containing nucleotide triphosphate hydrolases"/>
    <property type="match status" value="1"/>
</dbReference>
<dbReference type="InterPro" id="IPR003593">
    <property type="entry name" value="AAA+_ATPase"/>
</dbReference>
<dbReference type="InterPro" id="IPR003439">
    <property type="entry name" value="ABC_transporter-like_ATP-bd"/>
</dbReference>
<dbReference type="InterPro" id="IPR017871">
    <property type="entry name" value="ABC_transporter-like_CS"/>
</dbReference>
<dbReference type="InterPro" id="IPR045865">
    <property type="entry name" value="ACT-like_dom_sf"/>
</dbReference>
<dbReference type="InterPro" id="IPR041701">
    <property type="entry name" value="MetN_ABC"/>
</dbReference>
<dbReference type="InterPro" id="IPR050086">
    <property type="entry name" value="MetN_ABC_transporter-like"/>
</dbReference>
<dbReference type="InterPro" id="IPR018449">
    <property type="entry name" value="NIL_domain"/>
</dbReference>
<dbReference type="InterPro" id="IPR027417">
    <property type="entry name" value="P-loop_NTPase"/>
</dbReference>
<dbReference type="PANTHER" id="PTHR43166">
    <property type="entry name" value="AMINO ACID IMPORT ATP-BINDING PROTEIN"/>
    <property type="match status" value="1"/>
</dbReference>
<dbReference type="PANTHER" id="PTHR43166:SF30">
    <property type="entry name" value="METHIONINE IMPORT ATP-BINDING PROTEIN METN"/>
    <property type="match status" value="1"/>
</dbReference>
<dbReference type="Pfam" id="PF00005">
    <property type="entry name" value="ABC_tran"/>
    <property type="match status" value="1"/>
</dbReference>
<dbReference type="Pfam" id="PF09383">
    <property type="entry name" value="NIL"/>
    <property type="match status" value="1"/>
</dbReference>
<dbReference type="SMART" id="SM00382">
    <property type="entry name" value="AAA"/>
    <property type="match status" value="1"/>
</dbReference>
<dbReference type="SMART" id="SM00930">
    <property type="entry name" value="NIL"/>
    <property type="match status" value="1"/>
</dbReference>
<dbReference type="SUPFAM" id="SSF55021">
    <property type="entry name" value="ACT-like"/>
    <property type="match status" value="1"/>
</dbReference>
<dbReference type="SUPFAM" id="SSF52540">
    <property type="entry name" value="P-loop containing nucleoside triphosphate hydrolases"/>
    <property type="match status" value="1"/>
</dbReference>
<dbReference type="PROSITE" id="PS00211">
    <property type="entry name" value="ABC_TRANSPORTER_1"/>
    <property type="match status" value="1"/>
</dbReference>
<dbReference type="PROSITE" id="PS50893">
    <property type="entry name" value="ABC_TRANSPORTER_2"/>
    <property type="match status" value="1"/>
</dbReference>
<dbReference type="PROSITE" id="PS51264">
    <property type="entry name" value="METN"/>
    <property type="match status" value="1"/>
</dbReference>
<keyword id="KW-0029">Amino-acid transport</keyword>
<keyword id="KW-0067">ATP-binding</keyword>
<keyword id="KW-1003">Cell membrane</keyword>
<keyword id="KW-0472">Membrane</keyword>
<keyword id="KW-0547">Nucleotide-binding</keyword>
<keyword id="KW-1278">Translocase</keyword>
<keyword id="KW-0813">Transport</keyword>